<proteinExistence type="inferred from homology"/>
<protein>
    <recommendedName>
        <fullName evidence="1">UPF0391 membrane protein Bxeno_A1464</fullName>
    </recommendedName>
</protein>
<dbReference type="EMBL" id="CP000270">
    <property type="protein sequence ID" value="ABE30002.1"/>
    <property type="molecule type" value="Genomic_DNA"/>
</dbReference>
<dbReference type="STRING" id="266265.Bxe_A2977"/>
<dbReference type="KEGG" id="bxb:DR64_657"/>
<dbReference type="KEGG" id="bxe:Bxe_A2977"/>
<dbReference type="eggNOG" id="COG5487">
    <property type="taxonomic scope" value="Bacteria"/>
</dbReference>
<dbReference type="Proteomes" id="UP000001817">
    <property type="component" value="Chromosome 1"/>
</dbReference>
<dbReference type="GO" id="GO:0005886">
    <property type="term" value="C:plasma membrane"/>
    <property type="evidence" value="ECO:0007669"/>
    <property type="project" value="UniProtKB-SubCell"/>
</dbReference>
<dbReference type="HAMAP" id="MF_01361">
    <property type="entry name" value="UPF0391"/>
    <property type="match status" value="1"/>
</dbReference>
<dbReference type="InterPro" id="IPR009760">
    <property type="entry name" value="DUF1328"/>
</dbReference>
<dbReference type="NCBIfam" id="NF010226">
    <property type="entry name" value="PRK13682.1-1"/>
    <property type="match status" value="1"/>
</dbReference>
<dbReference type="NCBIfam" id="NF010229">
    <property type="entry name" value="PRK13682.1-4"/>
    <property type="match status" value="1"/>
</dbReference>
<dbReference type="Pfam" id="PF07043">
    <property type="entry name" value="DUF1328"/>
    <property type="match status" value="1"/>
</dbReference>
<dbReference type="PIRSF" id="PIRSF036466">
    <property type="entry name" value="UCP036466"/>
    <property type="match status" value="1"/>
</dbReference>
<gene>
    <name type="ordered locus">Bxeno_A1464</name>
    <name type="ORF">Bxe_A2977</name>
</gene>
<comment type="subcellular location">
    <subcellularLocation>
        <location evidence="1">Cell membrane</location>
        <topology evidence="1">Multi-pass membrane protein</topology>
    </subcellularLocation>
</comment>
<comment type="similarity">
    <text evidence="1">Belongs to the UPF0391 family.</text>
</comment>
<feature type="chain" id="PRO_0000256726" description="UPF0391 membrane protein Bxeno_A1464">
    <location>
        <begin position="1"/>
        <end position="53"/>
    </location>
</feature>
<feature type="transmembrane region" description="Helical" evidence="1">
    <location>
        <begin position="5"/>
        <end position="25"/>
    </location>
</feature>
<feature type="transmembrane region" description="Helical" evidence="1">
    <location>
        <begin position="30"/>
        <end position="50"/>
    </location>
</feature>
<keyword id="KW-1003">Cell membrane</keyword>
<keyword id="KW-0472">Membrane</keyword>
<keyword id="KW-1185">Reference proteome</keyword>
<keyword id="KW-0812">Transmembrane</keyword>
<keyword id="KW-1133">Transmembrane helix</keyword>
<accession>Q141I7</accession>
<sequence>MLRYAAIFFIIAIIAAVFGFGGIAAGATEIAKVLFFIFVVIFLVTLLMGVMRR</sequence>
<evidence type="ECO:0000255" key="1">
    <source>
        <dbReference type="HAMAP-Rule" id="MF_01361"/>
    </source>
</evidence>
<name>Y1464_PARXL</name>
<organism>
    <name type="scientific">Paraburkholderia xenovorans (strain LB400)</name>
    <dbReference type="NCBI Taxonomy" id="266265"/>
    <lineage>
        <taxon>Bacteria</taxon>
        <taxon>Pseudomonadati</taxon>
        <taxon>Pseudomonadota</taxon>
        <taxon>Betaproteobacteria</taxon>
        <taxon>Burkholderiales</taxon>
        <taxon>Burkholderiaceae</taxon>
        <taxon>Paraburkholderia</taxon>
    </lineage>
</organism>
<reference key="1">
    <citation type="journal article" date="2006" name="Proc. Natl. Acad. Sci. U.S.A.">
        <title>Burkholderia xenovorans LB400 harbors a multi-replicon, 9.73-Mbp genome shaped for versatility.</title>
        <authorList>
            <person name="Chain P.S.G."/>
            <person name="Denef V.J."/>
            <person name="Konstantinidis K.T."/>
            <person name="Vergez L.M."/>
            <person name="Agullo L."/>
            <person name="Reyes V.L."/>
            <person name="Hauser L."/>
            <person name="Cordova M."/>
            <person name="Gomez L."/>
            <person name="Gonzalez M."/>
            <person name="Land M."/>
            <person name="Lao V."/>
            <person name="Larimer F."/>
            <person name="LiPuma J.J."/>
            <person name="Mahenthiralingam E."/>
            <person name="Malfatti S.A."/>
            <person name="Marx C.J."/>
            <person name="Parnell J.J."/>
            <person name="Ramette A."/>
            <person name="Richardson P."/>
            <person name="Seeger M."/>
            <person name="Smith D."/>
            <person name="Spilker T."/>
            <person name="Sul W.J."/>
            <person name="Tsoi T.V."/>
            <person name="Ulrich L.E."/>
            <person name="Zhulin I.B."/>
            <person name="Tiedje J.M."/>
        </authorList>
    </citation>
    <scope>NUCLEOTIDE SEQUENCE [LARGE SCALE GENOMIC DNA]</scope>
    <source>
        <strain>LB400</strain>
    </source>
</reference>